<accession>B8H4W0</accession>
<dbReference type="EC" id="6.1.1.19" evidence="1"/>
<dbReference type="EMBL" id="CP001340">
    <property type="protein sequence ID" value="ACL96934.1"/>
    <property type="molecule type" value="Genomic_DNA"/>
</dbReference>
<dbReference type="RefSeq" id="WP_010921188.1">
    <property type="nucleotide sequence ID" value="NC_011916.1"/>
</dbReference>
<dbReference type="RefSeq" id="YP_002518842.1">
    <property type="nucleotide sequence ID" value="NC_011916.1"/>
</dbReference>
<dbReference type="SMR" id="B8H4W0"/>
<dbReference type="GeneID" id="7332466"/>
<dbReference type="KEGG" id="ccs:CCNA_03469"/>
<dbReference type="PATRIC" id="fig|565050.3.peg.3383"/>
<dbReference type="HOGENOM" id="CLU_006406_5_1_5"/>
<dbReference type="OrthoDB" id="9803211at2"/>
<dbReference type="PhylomeDB" id="B8H4W0"/>
<dbReference type="Proteomes" id="UP000001364">
    <property type="component" value="Chromosome"/>
</dbReference>
<dbReference type="GO" id="GO:0005737">
    <property type="term" value="C:cytoplasm"/>
    <property type="evidence" value="ECO:0007669"/>
    <property type="project" value="UniProtKB-SubCell"/>
</dbReference>
<dbReference type="GO" id="GO:0004814">
    <property type="term" value="F:arginine-tRNA ligase activity"/>
    <property type="evidence" value="ECO:0007669"/>
    <property type="project" value="UniProtKB-UniRule"/>
</dbReference>
<dbReference type="GO" id="GO:0005524">
    <property type="term" value="F:ATP binding"/>
    <property type="evidence" value="ECO:0007669"/>
    <property type="project" value="UniProtKB-UniRule"/>
</dbReference>
<dbReference type="GO" id="GO:0006420">
    <property type="term" value="P:arginyl-tRNA aminoacylation"/>
    <property type="evidence" value="ECO:0007669"/>
    <property type="project" value="UniProtKB-UniRule"/>
</dbReference>
<dbReference type="CDD" id="cd00671">
    <property type="entry name" value="ArgRS_core"/>
    <property type="match status" value="1"/>
</dbReference>
<dbReference type="Gene3D" id="3.30.1360.70">
    <property type="entry name" value="Arginyl tRNA synthetase N-terminal domain"/>
    <property type="match status" value="1"/>
</dbReference>
<dbReference type="Gene3D" id="3.40.50.620">
    <property type="entry name" value="HUPs"/>
    <property type="match status" value="1"/>
</dbReference>
<dbReference type="Gene3D" id="1.10.730.10">
    <property type="entry name" value="Isoleucyl-tRNA Synthetase, Domain 1"/>
    <property type="match status" value="1"/>
</dbReference>
<dbReference type="HAMAP" id="MF_00123">
    <property type="entry name" value="Arg_tRNA_synth"/>
    <property type="match status" value="1"/>
</dbReference>
<dbReference type="InterPro" id="IPR001412">
    <property type="entry name" value="aa-tRNA-synth_I_CS"/>
</dbReference>
<dbReference type="InterPro" id="IPR001278">
    <property type="entry name" value="Arg-tRNA-ligase"/>
</dbReference>
<dbReference type="InterPro" id="IPR005148">
    <property type="entry name" value="Arg-tRNA-synth_N"/>
</dbReference>
<dbReference type="InterPro" id="IPR036695">
    <property type="entry name" value="Arg-tRNA-synth_N_sf"/>
</dbReference>
<dbReference type="InterPro" id="IPR035684">
    <property type="entry name" value="ArgRS_core"/>
</dbReference>
<dbReference type="InterPro" id="IPR008909">
    <property type="entry name" value="DALR_anticod-bd"/>
</dbReference>
<dbReference type="InterPro" id="IPR014729">
    <property type="entry name" value="Rossmann-like_a/b/a_fold"/>
</dbReference>
<dbReference type="InterPro" id="IPR009080">
    <property type="entry name" value="tRNAsynth_Ia_anticodon-bd"/>
</dbReference>
<dbReference type="NCBIfam" id="TIGR00456">
    <property type="entry name" value="argS"/>
    <property type="match status" value="1"/>
</dbReference>
<dbReference type="PANTHER" id="PTHR11956:SF5">
    <property type="entry name" value="ARGININE--TRNA LIGASE, CYTOPLASMIC"/>
    <property type="match status" value="1"/>
</dbReference>
<dbReference type="PANTHER" id="PTHR11956">
    <property type="entry name" value="ARGINYL-TRNA SYNTHETASE"/>
    <property type="match status" value="1"/>
</dbReference>
<dbReference type="Pfam" id="PF03485">
    <property type="entry name" value="Arg_tRNA_synt_N"/>
    <property type="match status" value="1"/>
</dbReference>
<dbReference type="Pfam" id="PF05746">
    <property type="entry name" value="DALR_1"/>
    <property type="match status" value="1"/>
</dbReference>
<dbReference type="Pfam" id="PF00750">
    <property type="entry name" value="tRNA-synt_1d"/>
    <property type="match status" value="2"/>
</dbReference>
<dbReference type="PRINTS" id="PR01038">
    <property type="entry name" value="TRNASYNTHARG"/>
</dbReference>
<dbReference type="SMART" id="SM01016">
    <property type="entry name" value="Arg_tRNA_synt_N"/>
    <property type="match status" value="1"/>
</dbReference>
<dbReference type="SMART" id="SM00836">
    <property type="entry name" value="DALR_1"/>
    <property type="match status" value="1"/>
</dbReference>
<dbReference type="SUPFAM" id="SSF47323">
    <property type="entry name" value="Anticodon-binding domain of a subclass of class I aminoacyl-tRNA synthetases"/>
    <property type="match status" value="1"/>
</dbReference>
<dbReference type="SUPFAM" id="SSF55190">
    <property type="entry name" value="Arginyl-tRNA synthetase (ArgRS), N-terminal 'additional' domain"/>
    <property type="match status" value="1"/>
</dbReference>
<dbReference type="SUPFAM" id="SSF52374">
    <property type="entry name" value="Nucleotidylyl transferase"/>
    <property type="match status" value="1"/>
</dbReference>
<dbReference type="PROSITE" id="PS00178">
    <property type="entry name" value="AA_TRNA_LIGASE_I"/>
    <property type="match status" value="1"/>
</dbReference>
<proteinExistence type="inferred from homology"/>
<reference key="1">
    <citation type="journal article" date="2010" name="J. Bacteriol.">
        <title>The genetic basis of laboratory adaptation in Caulobacter crescentus.</title>
        <authorList>
            <person name="Marks M.E."/>
            <person name="Castro-Rojas C.M."/>
            <person name="Teiling C."/>
            <person name="Du L."/>
            <person name="Kapatral V."/>
            <person name="Walunas T.L."/>
            <person name="Crosson S."/>
        </authorList>
    </citation>
    <scope>NUCLEOTIDE SEQUENCE [LARGE SCALE GENOMIC DNA]</scope>
    <source>
        <strain>NA1000 / CB15N</strain>
    </source>
</reference>
<name>SYR_CAUVN</name>
<comment type="catalytic activity">
    <reaction evidence="1">
        <text>tRNA(Arg) + L-arginine + ATP = L-arginyl-tRNA(Arg) + AMP + diphosphate</text>
        <dbReference type="Rhea" id="RHEA:20301"/>
        <dbReference type="Rhea" id="RHEA-COMP:9658"/>
        <dbReference type="Rhea" id="RHEA-COMP:9673"/>
        <dbReference type="ChEBI" id="CHEBI:30616"/>
        <dbReference type="ChEBI" id="CHEBI:32682"/>
        <dbReference type="ChEBI" id="CHEBI:33019"/>
        <dbReference type="ChEBI" id="CHEBI:78442"/>
        <dbReference type="ChEBI" id="CHEBI:78513"/>
        <dbReference type="ChEBI" id="CHEBI:456215"/>
        <dbReference type="EC" id="6.1.1.19"/>
    </reaction>
</comment>
<comment type="subunit">
    <text evidence="1">Monomer.</text>
</comment>
<comment type="subcellular location">
    <subcellularLocation>
        <location evidence="1">Cytoplasm</location>
    </subcellularLocation>
</comment>
<comment type="similarity">
    <text evidence="1">Belongs to the class-I aminoacyl-tRNA synthetase family.</text>
</comment>
<organism>
    <name type="scientific">Caulobacter vibrioides (strain NA1000 / CB15N)</name>
    <name type="common">Caulobacter crescentus</name>
    <dbReference type="NCBI Taxonomy" id="565050"/>
    <lineage>
        <taxon>Bacteria</taxon>
        <taxon>Pseudomonadati</taxon>
        <taxon>Pseudomonadota</taxon>
        <taxon>Alphaproteobacteria</taxon>
        <taxon>Caulobacterales</taxon>
        <taxon>Caulobacteraceae</taxon>
        <taxon>Caulobacter</taxon>
    </lineage>
</organism>
<protein>
    <recommendedName>
        <fullName evidence="1">Arginine--tRNA ligase</fullName>
        <ecNumber evidence="1">6.1.1.19</ecNumber>
    </recommendedName>
    <alternativeName>
        <fullName evidence="1">Arginyl-tRNA synthetase</fullName>
        <shortName evidence="1">ArgRS</shortName>
    </alternativeName>
</protein>
<feature type="chain" id="PRO_1000198882" description="Arginine--tRNA ligase">
    <location>
        <begin position="1"/>
        <end position="600"/>
    </location>
</feature>
<feature type="short sequence motif" description="'HIGH' region">
    <location>
        <begin position="123"/>
        <end position="133"/>
    </location>
</feature>
<evidence type="ECO:0000255" key="1">
    <source>
        <dbReference type="HAMAP-Rule" id="MF_00123"/>
    </source>
</evidence>
<keyword id="KW-0030">Aminoacyl-tRNA synthetase</keyword>
<keyword id="KW-0067">ATP-binding</keyword>
<keyword id="KW-0963">Cytoplasm</keyword>
<keyword id="KW-0436">Ligase</keyword>
<keyword id="KW-0547">Nucleotide-binding</keyword>
<keyword id="KW-0648">Protein biosynthesis</keyword>
<keyword id="KW-1185">Reference proteome</keyword>
<gene>
    <name evidence="1" type="primary">argS</name>
    <name type="ordered locus">CCNA_03469</name>
</gene>
<sequence length="600" mass="66335">MNDLKRSLSEAAAAAFQAAGLPPEFGRVTASDRPDLADFQCNGALAAAKSAKRNPREIAVQVVDILKGDPRLASVEIAGVGFINMRVSDEALSARAREIASDDRTGAQLLETPRRVLIDYAGPNVAKPMHVGHLRASIIGESVKRLYRFRGDDVVGDAHFGDWGFQMGLLISAIMDEDPFINALMEKLPEAPRGFSSADEAKVMAEFEKRITLADLDRIYPAASVRQKEDPAFKERARKATAELQNGRFGYRLLWRHFVNVSRVALEREFHALGVDFDLWKGESDVNDLIEPMVLQLEAKGLLVQDQGARIVRVAREGDKRDVPPLLVVSSEGSAMYGTTDLATILDRRKSFDPHLILYCVDQRQADHFETVFRAAYLAGYAEEGALEHIGFGTMNGADGKPFKTRAGGVLKLHDLIEMAREKARERLREAGLGAELSEEQFEDTAHKVGVAALKFADLQNFRGTSYVFDLDRFTSFEGKTGPYLLYQSVRIKSVLRRAAESGAVAGRVEIHEPAERDLAMLLDAFEGALQEAYDKKAPNFVAEHAYKLAQSFSKFYAACPIMSADTETLRASRLTLAETTLRQLELALDLLGIEAPERM</sequence>